<feature type="transit peptide" description="Mitochondrion" evidence="8">
    <location>
        <begin position="1"/>
        <end position="32"/>
    </location>
</feature>
<feature type="chain" id="PRO_0000020002" description="NADH dehydrogenase [ubiquinone] flavoprotein 2, mitochondrial">
    <location>
        <begin position="33"/>
        <end position="249"/>
    </location>
</feature>
<feature type="region of interest" description="Disordered" evidence="3">
    <location>
        <begin position="213"/>
        <end position="249"/>
    </location>
</feature>
<feature type="binding site" evidence="7 15 16 17">
    <location>
        <position position="135"/>
    </location>
    <ligand>
        <name>[2Fe-2S] cluster</name>
        <dbReference type="ChEBI" id="CHEBI:190135"/>
    </ligand>
</feature>
<feature type="binding site" evidence="7 15 16 17">
    <location>
        <position position="140"/>
    </location>
    <ligand>
        <name>[2Fe-2S] cluster</name>
        <dbReference type="ChEBI" id="CHEBI:190135"/>
    </ligand>
</feature>
<feature type="binding site" evidence="7 15 16 17">
    <location>
        <position position="176"/>
    </location>
    <ligand>
        <name>[2Fe-2S] cluster</name>
        <dbReference type="ChEBI" id="CHEBI:190135"/>
    </ligand>
</feature>
<feature type="binding site" evidence="7 15 16 17">
    <location>
        <position position="180"/>
    </location>
    <ligand>
        <name>[2Fe-2S] cluster</name>
        <dbReference type="ChEBI" id="CHEBI:190135"/>
    </ligand>
</feature>
<feature type="modified residue" description="N6-acetyllysine" evidence="2">
    <location>
        <position position="61"/>
    </location>
</feature>
<feature type="modified residue" description="Phosphotyrosine; by SRC" evidence="1">
    <location>
        <position position="193"/>
    </location>
</feature>
<feature type="sequence conflict" description="In Ref. 4; AA sequence." evidence="10" ref="4">
    <original>QNGWLPISA</original>
    <variation>SSGTSYPDVLKBZZZPPGGAAIILW</variation>
    <location>
        <begin position="89"/>
        <end position="97"/>
    </location>
</feature>
<feature type="strand" evidence="18">
    <location>
        <begin position="38"/>
        <end position="40"/>
    </location>
</feature>
<feature type="strand" evidence="20">
    <location>
        <begin position="45"/>
        <end position="48"/>
    </location>
</feature>
<feature type="helix" evidence="18">
    <location>
        <begin position="57"/>
        <end position="67"/>
    </location>
</feature>
<feature type="helix" evidence="18">
    <location>
        <begin position="75"/>
        <end position="78"/>
    </location>
</feature>
<feature type="helix" evidence="18">
    <location>
        <begin position="79"/>
        <end position="90"/>
    </location>
</feature>
<feature type="helix" evidence="18">
    <location>
        <begin position="95"/>
        <end position="105"/>
    </location>
</feature>
<feature type="helix" evidence="18">
    <location>
        <begin position="109"/>
        <end position="118"/>
    </location>
</feature>
<feature type="strand" evidence="21">
    <location>
        <begin position="120"/>
        <end position="122"/>
    </location>
</feature>
<feature type="strand" evidence="18">
    <location>
        <begin position="129"/>
        <end position="135"/>
    </location>
</feature>
<feature type="helix" evidence="18">
    <location>
        <begin position="138"/>
        <end position="142"/>
    </location>
</feature>
<feature type="helix" evidence="18">
    <location>
        <begin position="145"/>
        <end position="156"/>
    </location>
</feature>
<feature type="strand" evidence="18">
    <location>
        <begin position="167"/>
        <end position="175"/>
    </location>
</feature>
<feature type="helix" evidence="18">
    <location>
        <begin position="180"/>
        <end position="182"/>
    </location>
</feature>
<feature type="strand" evidence="18">
    <location>
        <begin position="186"/>
        <end position="188"/>
    </location>
</feature>
<feature type="strand" evidence="18">
    <location>
        <begin position="191"/>
        <end position="195"/>
    </location>
</feature>
<feature type="helix" evidence="18">
    <location>
        <begin position="198"/>
        <end position="209"/>
    </location>
</feature>
<feature type="strand" evidence="18">
    <location>
        <begin position="217"/>
        <end position="221"/>
    </location>
</feature>
<feature type="strand" evidence="18">
    <location>
        <begin position="223"/>
        <end position="226"/>
    </location>
</feature>
<feature type="strand" evidence="18">
    <location>
        <begin position="228"/>
        <end position="230"/>
    </location>
</feature>
<feature type="strand" evidence="19">
    <location>
        <begin position="232"/>
        <end position="234"/>
    </location>
</feature>
<feature type="turn" evidence="18">
    <location>
        <begin position="241"/>
        <end position="244"/>
    </location>
</feature>
<sequence length="249" mass="27308">MFLSAALRARAAGLAAHWGKHIRNLHKTAVQNGAGGALFVHRDTPENNPETPFDFTPENYKRIEAIVKNYPEGHKAAAVLPVLDLAQRQNGWLPISAMNKVAEILQVPPMRVYEVATFYTMYNRKPVGKYHIQVCTTTPCMLRNSDSILEAIQKKLGIKVGETTPDKLFTLIEVECLGACVNAPMVQINDNYYEDLTPKDIEEIIDELKAGKIPKPGPRSGRFSCEPAGGLTSLTEPPKGPGFGVQAGL</sequence>
<accession>P04394</accession>
<accession>Q3T0G9</accession>
<organism>
    <name type="scientific">Bos taurus</name>
    <name type="common">Bovine</name>
    <dbReference type="NCBI Taxonomy" id="9913"/>
    <lineage>
        <taxon>Eukaryota</taxon>
        <taxon>Metazoa</taxon>
        <taxon>Chordata</taxon>
        <taxon>Craniata</taxon>
        <taxon>Vertebrata</taxon>
        <taxon>Euteleostomi</taxon>
        <taxon>Mammalia</taxon>
        <taxon>Eutheria</taxon>
        <taxon>Laurasiatheria</taxon>
        <taxon>Artiodactyla</taxon>
        <taxon>Ruminantia</taxon>
        <taxon>Pecora</taxon>
        <taxon>Bovidae</taxon>
        <taxon>Bovinae</taxon>
        <taxon>Bos</taxon>
    </lineage>
</organism>
<protein>
    <recommendedName>
        <fullName>NADH dehydrogenase [ubiquinone] flavoprotein 2, mitochondrial</fullName>
        <ecNumber evidence="4 5">7.1.1.2</ecNumber>
    </recommendedName>
    <alternativeName>
        <fullName>NADH dehydrogenase subunit II</fullName>
    </alternativeName>
    <alternativeName>
        <fullName evidence="9">NADH-ubiquinone oxidoreductase 24 kDa subunit</fullName>
    </alternativeName>
</protein>
<gene>
    <name type="primary">NDUFV2</name>
</gene>
<dbReference type="EC" id="7.1.1.2" evidence="4 5"/>
<dbReference type="EMBL" id="X14724">
    <property type="protein sequence ID" value="CAA32848.1"/>
    <property type="molecule type" value="mRNA"/>
</dbReference>
<dbReference type="EMBL" id="BC102401">
    <property type="protein sequence ID" value="AAI02402.1"/>
    <property type="molecule type" value="mRNA"/>
</dbReference>
<dbReference type="EMBL" id="M22539">
    <property type="protein sequence ID" value="AAA87358.1"/>
    <property type="molecule type" value="mRNA"/>
</dbReference>
<dbReference type="PIR" id="B30113">
    <property type="entry name" value="B30113"/>
</dbReference>
<dbReference type="RefSeq" id="NP_776990.1">
    <property type="nucleotide sequence ID" value="NM_174565.3"/>
</dbReference>
<dbReference type="PDB" id="5LC5">
    <property type="method" value="EM"/>
    <property type="resolution" value="4.35 A"/>
    <property type="chains" value="E=1-249"/>
</dbReference>
<dbReference type="PDB" id="5LDW">
    <property type="method" value="EM"/>
    <property type="resolution" value="4.27 A"/>
    <property type="chains" value="E=33-249"/>
</dbReference>
<dbReference type="PDB" id="5LDX">
    <property type="method" value="EM"/>
    <property type="resolution" value="5.60 A"/>
    <property type="chains" value="E=33-249"/>
</dbReference>
<dbReference type="PDB" id="5O31">
    <property type="method" value="EM"/>
    <property type="resolution" value="4.13 A"/>
    <property type="chains" value="E=33-249"/>
</dbReference>
<dbReference type="PDB" id="7DGQ">
    <property type="method" value="EM"/>
    <property type="resolution" value="5.00 A"/>
    <property type="chains" value="9=33-249"/>
</dbReference>
<dbReference type="PDB" id="7DGR">
    <property type="method" value="EM"/>
    <property type="resolution" value="4.60 A"/>
    <property type="chains" value="9=33-249"/>
</dbReference>
<dbReference type="PDB" id="7DGS">
    <property type="method" value="EM"/>
    <property type="resolution" value="7.80 A"/>
    <property type="chains" value="9=33-249"/>
</dbReference>
<dbReference type="PDB" id="7DGZ">
    <property type="method" value="EM"/>
    <property type="resolution" value="3.80 A"/>
    <property type="chains" value="9=33-249"/>
</dbReference>
<dbReference type="PDB" id="7DH0">
    <property type="method" value="EM"/>
    <property type="resolution" value="4.20 A"/>
    <property type="chains" value="9=33-249"/>
</dbReference>
<dbReference type="PDB" id="7DKF">
    <property type="method" value="EM"/>
    <property type="resolution" value="8.30 A"/>
    <property type="chains" value="92=33-249"/>
</dbReference>
<dbReference type="PDB" id="7QSD">
    <property type="method" value="EM"/>
    <property type="resolution" value="3.10 A"/>
    <property type="chains" value="E=1-249"/>
</dbReference>
<dbReference type="PDB" id="7QSK">
    <property type="method" value="EM"/>
    <property type="resolution" value="2.84 A"/>
    <property type="chains" value="E=1-249"/>
</dbReference>
<dbReference type="PDB" id="7QSL">
    <property type="method" value="EM"/>
    <property type="resolution" value="2.76 A"/>
    <property type="chains" value="E=1-249"/>
</dbReference>
<dbReference type="PDB" id="7QSM">
    <property type="method" value="EM"/>
    <property type="resolution" value="2.30 A"/>
    <property type="chains" value="E=1-249"/>
</dbReference>
<dbReference type="PDB" id="7QSN">
    <property type="method" value="EM"/>
    <property type="resolution" value="2.81 A"/>
    <property type="chains" value="E=1-249"/>
</dbReference>
<dbReference type="PDB" id="7QSO">
    <property type="method" value="EM"/>
    <property type="resolution" value="3.02 A"/>
    <property type="chains" value="E=1-249"/>
</dbReference>
<dbReference type="PDB" id="7R41">
    <property type="method" value="EM"/>
    <property type="resolution" value="2.30 A"/>
    <property type="chains" value="E=1-249"/>
</dbReference>
<dbReference type="PDB" id="7R42">
    <property type="method" value="EM"/>
    <property type="resolution" value="2.30 A"/>
    <property type="chains" value="E=1-249"/>
</dbReference>
<dbReference type="PDB" id="7R43">
    <property type="method" value="EM"/>
    <property type="resolution" value="2.40 A"/>
    <property type="chains" value="E=1-249"/>
</dbReference>
<dbReference type="PDB" id="7R44">
    <property type="method" value="EM"/>
    <property type="resolution" value="2.40 A"/>
    <property type="chains" value="E=1-249"/>
</dbReference>
<dbReference type="PDB" id="7R45">
    <property type="method" value="EM"/>
    <property type="resolution" value="2.40 A"/>
    <property type="chains" value="E=1-249"/>
</dbReference>
<dbReference type="PDB" id="7R46">
    <property type="method" value="EM"/>
    <property type="resolution" value="2.40 A"/>
    <property type="chains" value="E=1-249"/>
</dbReference>
<dbReference type="PDB" id="7R47">
    <property type="method" value="EM"/>
    <property type="resolution" value="2.30 A"/>
    <property type="chains" value="E=1-249"/>
</dbReference>
<dbReference type="PDB" id="7R48">
    <property type="method" value="EM"/>
    <property type="resolution" value="2.30 A"/>
    <property type="chains" value="E=1-249"/>
</dbReference>
<dbReference type="PDB" id="7R4C">
    <property type="method" value="EM"/>
    <property type="resolution" value="2.30 A"/>
    <property type="chains" value="E=1-249"/>
</dbReference>
<dbReference type="PDB" id="7R4D">
    <property type="method" value="EM"/>
    <property type="resolution" value="2.30 A"/>
    <property type="chains" value="E=1-249"/>
</dbReference>
<dbReference type="PDB" id="7R4F">
    <property type="method" value="EM"/>
    <property type="resolution" value="2.40 A"/>
    <property type="chains" value="E=1-249"/>
</dbReference>
<dbReference type="PDB" id="7R4G">
    <property type="method" value="EM"/>
    <property type="resolution" value="2.50 A"/>
    <property type="chains" value="E=1-249"/>
</dbReference>
<dbReference type="PDB" id="8Q0A">
    <property type="method" value="EM"/>
    <property type="resolution" value="3.10 A"/>
    <property type="chains" value="E=1-249"/>
</dbReference>
<dbReference type="PDB" id="8Q0F">
    <property type="method" value="EM"/>
    <property type="resolution" value="3.10 A"/>
    <property type="chains" value="E=1-249"/>
</dbReference>
<dbReference type="PDB" id="8Q0J">
    <property type="method" value="EM"/>
    <property type="resolution" value="3.80 A"/>
    <property type="chains" value="E=1-249"/>
</dbReference>
<dbReference type="PDB" id="8Q0M">
    <property type="method" value="EM"/>
    <property type="resolution" value="3.10 A"/>
    <property type="chains" value="E=1-249"/>
</dbReference>
<dbReference type="PDB" id="8Q0O">
    <property type="method" value="EM"/>
    <property type="resolution" value="3.10 A"/>
    <property type="chains" value="E=1-249"/>
</dbReference>
<dbReference type="PDB" id="8Q0Q">
    <property type="method" value="EM"/>
    <property type="resolution" value="3.60 A"/>
    <property type="chains" value="E=1-249"/>
</dbReference>
<dbReference type="PDB" id="8Q1P">
    <property type="method" value="EM"/>
    <property type="resolution" value="2.90 A"/>
    <property type="chains" value="E=1-249"/>
</dbReference>
<dbReference type="PDB" id="8Q1U">
    <property type="method" value="EM"/>
    <property type="resolution" value="3.30 A"/>
    <property type="chains" value="E=1-249"/>
</dbReference>
<dbReference type="PDB" id="8Q1Y">
    <property type="method" value="EM"/>
    <property type="resolution" value="2.60 A"/>
    <property type="chains" value="E=1-249"/>
</dbReference>
<dbReference type="PDB" id="8Q25">
    <property type="method" value="EM"/>
    <property type="resolution" value="2.80 A"/>
    <property type="chains" value="E=1-249"/>
</dbReference>
<dbReference type="PDB" id="8Q45">
    <property type="method" value="EM"/>
    <property type="resolution" value="2.70 A"/>
    <property type="chains" value="E=1-249"/>
</dbReference>
<dbReference type="PDB" id="8Q46">
    <property type="method" value="EM"/>
    <property type="resolution" value="2.60 A"/>
    <property type="chains" value="E=1-249"/>
</dbReference>
<dbReference type="PDB" id="8Q47">
    <property type="method" value="EM"/>
    <property type="resolution" value="2.90 A"/>
    <property type="chains" value="E=1-249"/>
</dbReference>
<dbReference type="PDB" id="8Q48">
    <property type="method" value="EM"/>
    <property type="resolution" value="2.50 A"/>
    <property type="chains" value="E=1-249"/>
</dbReference>
<dbReference type="PDB" id="8Q49">
    <property type="method" value="EM"/>
    <property type="resolution" value="2.60 A"/>
    <property type="chains" value="E=1-249"/>
</dbReference>
<dbReference type="PDB" id="8Q4A">
    <property type="method" value="EM"/>
    <property type="resolution" value="2.60 A"/>
    <property type="chains" value="E=1-249"/>
</dbReference>
<dbReference type="PDBsum" id="5LC5"/>
<dbReference type="PDBsum" id="5LDW"/>
<dbReference type="PDBsum" id="5LDX"/>
<dbReference type="PDBsum" id="5O31"/>
<dbReference type="PDBsum" id="7DGQ"/>
<dbReference type="PDBsum" id="7DGR"/>
<dbReference type="PDBsum" id="7DGS"/>
<dbReference type="PDBsum" id="7DGZ"/>
<dbReference type="PDBsum" id="7DH0"/>
<dbReference type="PDBsum" id="7DKF"/>
<dbReference type="PDBsum" id="7QSD"/>
<dbReference type="PDBsum" id="7QSK"/>
<dbReference type="PDBsum" id="7QSL"/>
<dbReference type="PDBsum" id="7QSM"/>
<dbReference type="PDBsum" id="7QSN"/>
<dbReference type="PDBsum" id="7QSO"/>
<dbReference type="PDBsum" id="7R41"/>
<dbReference type="PDBsum" id="7R42"/>
<dbReference type="PDBsum" id="7R43"/>
<dbReference type="PDBsum" id="7R44"/>
<dbReference type="PDBsum" id="7R45"/>
<dbReference type="PDBsum" id="7R46"/>
<dbReference type="PDBsum" id="7R47"/>
<dbReference type="PDBsum" id="7R48"/>
<dbReference type="PDBsum" id="7R4C"/>
<dbReference type="PDBsum" id="7R4D"/>
<dbReference type="PDBsum" id="7R4F"/>
<dbReference type="PDBsum" id="7R4G"/>
<dbReference type="PDBsum" id="8Q0A"/>
<dbReference type="PDBsum" id="8Q0F"/>
<dbReference type="PDBsum" id="8Q0J"/>
<dbReference type="PDBsum" id="8Q0M"/>
<dbReference type="PDBsum" id="8Q0O"/>
<dbReference type="PDBsum" id="8Q0Q"/>
<dbReference type="PDBsum" id="8Q1P"/>
<dbReference type="PDBsum" id="8Q1U"/>
<dbReference type="PDBsum" id="8Q1Y"/>
<dbReference type="PDBsum" id="8Q25"/>
<dbReference type="PDBsum" id="8Q45"/>
<dbReference type="PDBsum" id="8Q46"/>
<dbReference type="PDBsum" id="8Q47"/>
<dbReference type="PDBsum" id="8Q48"/>
<dbReference type="PDBsum" id="8Q49"/>
<dbReference type="PDBsum" id="8Q4A"/>
<dbReference type="EMDB" id="EMD-14127"/>
<dbReference type="EMDB" id="EMD-14132"/>
<dbReference type="EMDB" id="EMD-14133"/>
<dbReference type="EMDB" id="EMD-14134"/>
<dbReference type="EMDB" id="EMD-14139"/>
<dbReference type="EMDB" id="EMD-14140"/>
<dbReference type="EMDB" id="EMD-14251"/>
<dbReference type="EMDB" id="EMD-14256"/>
<dbReference type="EMDB" id="EMD-14261"/>
<dbReference type="EMDB" id="EMD-14266"/>
<dbReference type="EMDB" id="EMD-14272"/>
<dbReference type="EMDB" id="EMD-14277"/>
<dbReference type="EMDB" id="EMD-14282"/>
<dbReference type="EMDB" id="EMD-14287"/>
<dbReference type="EMDB" id="EMD-14292"/>
<dbReference type="EMDB" id="EMD-14297"/>
<dbReference type="EMDB" id="EMD-14302"/>
<dbReference type="EMDB" id="EMD-14307"/>
<dbReference type="EMDB" id="EMD-18051"/>
<dbReference type="EMDB" id="EMD-18052"/>
<dbReference type="EMDB" id="EMD-18054"/>
<dbReference type="EMDB" id="EMD-18055"/>
<dbReference type="EMDB" id="EMD-18057"/>
<dbReference type="EMDB" id="EMD-18059"/>
<dbReference type="EMDB" id="EMD-18066"/>
<dbReference type="EMDB" id="EMD-18067"/>
<dbReference type="EMDB" id="EMD-18068"/>
<dbReference type="EMDB" id="EMD-18069"/>
<dbReference type="EMDB" id="EMD-18138"/>
<dbReference type="EMDB" id="EMD-18139"/>
<dbReference type="EMDB" id="EMD-18140"/>
<dbReference type="EMDB" id="EMD-18141"/>
<dbReference type="EMDB" id="EMD-18142"/>
<dbReference type="EMDB" id="EMD-18143"/>
<dbReference type="EMDB" id="EMD-30673"/>
<dbReference type="EMDB" id="EMD-30674"/>
<dbReference type="EMDB" id="EMD-30675"/>
<dbReference type="EMDB" id="EMD-30676"/>
<dbReference type="EMDB" id="EMD-30677"/>
<dbReference type="EMDB" id="EMD-30706"/>
<dbReference type="EMDB" id="EMD-3731"/>
<dbReference type="EMDB" id="EMD-4032"/>
<dbReference type="EMDB" id="EMD-4040"/>
<dbReference type="EMDB" id="EMD-4041"/>
<dbReference type="SMR" id="P04394"/>
<dbReference type="CORUM" id="P04394"/>
<dbReference type="DIP" id="DIP-38821N"/>
<dbReference type="FunCoup" id="P04394">
    <property type="interactions" value="2569"/>
</dbReference>
<dbReference type="IntAct" id="P04394">
    <property type="interactions" value="3"/>
</dbReference>
<dbReference type="STRING" id="9913.ENSBTAP00000052906"/>
<dbReference type="TCDB" id="3.D.1.6.1">
    <property type="family name" value="the h+ or na+-translocating nadh dehydrogenase (ndh) family"/>
</dbReference>
<dbReference type="PaxDb" id="9913-ENSBTAP00000052906"/>
<dbReference type="PeptideAtlas" id="P04394"/>
<dbReference type="GeneID" id="282290"/>
<dbReference type="KEGG" id="bta:282290"/>
<dbReference type="CTD" id="4729"/>
<dbReference type="VEuPathDB" id="HostDB:ENSBTAG00000004871"/>
<dbReference type="eggNOG" id="KOG3196">
    <property type="taxonomic scope" value="Eukaryota"/>
</dbReference>
<dbReference type="HOGENOM" id="CLU_054362_1_0_1"/>
<dbReference type="InParanoid" id="P04394"/>
<dbReference type="OMA" id="IMSIYPE"/>
<dbReference type="OrthoDB" id="10254187at2759"/>
<dbReference type="TreeFam" id="TF300004"/>
<dbReference type="Reactome" id="R-BTA-611105">
    <property type="pathway name" value="Respiratory electron transport"/>
</dbReference>
<dbReference type="Reactome" id="R-BTA-6799198">
    <property type="pathway name" value="Complex I biogenesis"/>
</dbReference>
<dbReference type="Proteomes" id="UP000009136">
    <property type="component" value="Chromosome 24"/>
</dbReference>
<dbReference type="Bgee" id="ENSBTAG00000004871">
    <property type="expression patterns" value="Expressed in spermatocyte and 105 other cell types or tissues"/>
</dbReference>
<dbReference type="GO" id="GO:0005743">
    <property type="term" value="C:mitochondrial inner membrane"/>
    <property type="evidence" value="ECO:0000314"/>
    <property type="project" value="UniProtKB"/>
</dbReference>
<dbReference type="GO" id="GO:0005739">
    <property type="term" value="C:mitochondrion"/>
    <property type="evidence" value="ECO:0000250"/>
    <property type="project" value="AgBase"/>
</dbReference>
<dbReference type="GO" id="GO:0045271">
    <property type="term" value="C:respiratory chain complex I"/>
    <property type="evidence" value="ECO:0000314"/>
    <property type="project" value="UniProtKB"/>
</dbReference>
<dbReference type="GO" id="GO:0051537">
    <property type="term" value="F:2 iron, 2 sulfur cluster binding"/>
    <property type="evidence" value="ECO:0007669"/>
    <property type="project" value="UniProtKB-KW"/>
</dbReference>
<dbReference type="GO" id="GO:0046872">
    <property type="term" value="F:metal ion binding"/>
    <property type="evidence" value="ECO:0007669"/>
    <property type="project" value="UniProtKB-KW"/>
</dbReference>
<dbReference type="GO" id="GO:0008137">
    <property type="term" value="F:NADH dehydrogenase (ubiquinone) activity"/>
    <property type="evidence" value="ECO:0000314"/>
    <property type="project" value="UniProtKB"/>
</dbReference>
<dbReference type="GO" id="GO:0006120">
    <property type="term" value="P:mitochondrial electron transport, NADH to ubiquinone"/>
    <property type="evidence" value="ECO:0000314"/>
    <property type="project" value="UniProtKB"/>
</dbReference>
<dbReference type="CDD" id="cd03064">
    <property type="entry name" value="TRX_Fd_NuoE"/>
    <property type="match status" value="1"/>
</dbReference>
<dbReference type="FunFam" id="3.40.30.10:FF:000022">
    <property type="entry name" value="NADH dehydrogenase flavoprotein 2, mitochondrial"/>
    <property type="match status" value="1"/>
</dbReference>
<dbReference type="FunFam" id="1.10.10.1590:FF:000001">
    <property type="entry name" value="NADH-quinone oxidoreductase subunit E"/>
    <property type="match status" value="1"/>
</dbReference>
<dbReference type="Gene3D" id="3.40.30.10">
    <property type="entry name" value="Glutaredoxin"/>
    <property type="match status" value="1"/>
</dbReference>
<dbReference type="Gene3D" id="1.10.10.1590">
    <property type="entry name" value="NADH-quinone oxidoreductase subunit E"/>
    <property type="match status" value="1"/>
</dbReference>
<dbReference type="InterPro" id="IPR002023">
    <property type="entry name" value="NuoE-like"/>
</dbReference>
<dbReference type="InterPro" id="IPR042128">
    <property type="entry name" value="NuoE_dom"/>
</dbReference>
<dbReference type="InterPro" id="IPR041921">
    <property type="entry name" value="NuoE_N"/>
</dbReference>
<dbReference type="InterPro" id="IPR036249">
    <property type="entry name" value="Thioredoxin-like_sf"/>
</dbReference>
<dbReference type="NCBIfam" id="TIGR01958">
    <property type="entry name" value="nuoE_fam"/>
    <property type="match status" value="1"/>
</dbReference>
<dbReference type="NCBIfam" id="NF005722">
    <property type="entry name" value="PRK07539.1-2"/>
    <property type="match status" value="1"/>
</dbReference>
<dbReference type="NCBIfam" id="NF005725">
    <property type="entry name" value="PRK07539.1-5"/>
    <property type="match status" value="1"/>
</dbReference>
<dbReference type="PANTHER" id="PTHR10371:SF3">
    <property type="entry name" value="NADH DEHYDROGENASE [UBIQUINONE] FLAVOPROTEIN 2, MITOCHONDRIAL"/>
    <property type="match status" value="1"/>
</dbReference>
<dbReference type="PANTHER" id="PTHR10371">
    <property type="entry name" value="NADH DEHYDROGENASE UBIQUINONE FLAVOPROTEIN 2, MITOCHONDRIAL"/>
    <property type="match status" value="1"/>
</dbReference>
<dbReference type="Pfam" id="PF01257">
    <property type="entry name" value="2Fe-2S_thioredx"/>
    <property type="match status" value="1"/>
</dbReference>
<dbReference type="PIRSF" id="PIRSF000216">
    <property type="entry name" value="NADH_DH_24kDa"/>
    <property type="match status" value="1"/>
</dbReference>
<dbReference type="SUPFAM" id="SSF52833">
    <property type="entry name" value="Thioredoxin-like"/>
    <property type="match status" value="1"/>
</dbReference>
<dbReference type="PROSITE" id="PS01099">
    <property type="entry name" value="COMPLEX1_24K"/>
    <property type="match status" value="1"/>
</dbReference>
<evidence type="ECO:0000250" key="1">
    <source>
        <dbReference type="UniProtKB" id="P19404"/>
    </source>
</evidence>
<evidence type="ECO:0000250" key="2">
    <source>
        <dbReference type="UniProtKB" id="Q9D6J6"/>
    </source>
</evidence>
<evidence type="ECO:0000256" key="3">
    <source>
        <dbReference type="SAM" id="MobiDB-lite"/>
    </source>
</evidence>
<evidence type="ECO:0000269" key="4">
    <source>
    </source>
</evidence>
<evidence type="ECO:0000269" key="5">
    <source>
    </source>
</evidence>
<evidence type="ECO:0000269" key="6">
    <source>
    </source>
</evidence>
<evidence type="ECO:0000269" key="7">
    <source>
    </source>
</evidence>
<evidence type="ECO:0000269" key="8">
    <source>
    </source>
</evidence>
<evidence type="ECO:0000303" key="9">
    <source>
    </source>
</evidence>
<evidence type="ECO:0000305" key="10"/>
<evidence type="ECO:0000305" key="11">
    <source>
    </source>
</evidence>
<evidence type="ECO:0000305" key="12">
    <source>
    </source>
</evidence>
<evidence type="ECO:0000305" key="13">
    <source>
    </source>
</evidence>
<evidence type="ECO:0000305" key="14">
    <source>
    </source>
</evidence>
<evidence type="ECO:0007744" key="15">
    <source>
        <dbReference type="PDB" id="5LC5"/>
    </source>
</evidence>
<evidence type="ECO:0007744" key="16">
    <source>
        <dbReference type="PDB" id="5LDW"/>
    </source>
</evidence>
<evidence type="ECO:0007744" key="17">
    <source>
        <dbReference type="PDB" id="5LDX"/>
    </source>
</evidence>
<evidence type="ECO:0007829" key="18">
    <source>
        <dbReference type="PDB" id="7QSM"/>
    </source>
</evidence>
<evidence type="ECO:0007829" key="19">
    <source>
        <dbReference type="PDB" id="7QSN"/>
    </source>
</evidence>
<evidence type="ECO:0007829" key="20">
    <source>
        <dbReference type="PDB" id="8Q25"/>
    </source>
</evidence>
<evidence type="ECO:0007829" key="21">
    <source>
        <dbReference type="PDB" id="8Q48"/>
    </source>
</evidence>
<name>NDUV2_BOVIN</name>
<keyword id="KW-0001">2Fe-2S</keyword>
<keyword id="KW-0002">3D-structure</keyword>
<keyword id="KW-0007">Acetylation</keyword>
<keyword id="KW-0903">Direct protein sequencing</keyword>
<keyword id="KW-0249">Electron transport</keyword>
<keyword id="KW-0408">Iron</keyword>
<keyword id="KW-0411">Iron-sulfur</keyword>
<keyword id="KW-0472">Membrane</keyword>
<keyword id="KW-0479">Metal-binding</keyword>
<keyword id="KW-0496">Mitochondrion</keyword>
<keyword id="KW-0999">Mitochondrion inner membrane</keyword>
<keyword id="KW-0520">NAD</keyword>
<keyword id="KW-0560">Oxidoreductase</keyword>
<keyword id="KW-0597">Phosphoprotein</keyword>
<keyword id="KW-1185">Reference proteome</keyword>
<keyword id="KW-0679">Respiratory chain</keyword>
<keyword id="KW-0809">Transit peptide</keyword>
<keyword id="KW-1278">Translocase</keyword>
<keyword id="KW-0813">Transport</keyword>
<keyword id="KW-0830">Ubiquinone</keyword>
<comment type="function">
    <text evidence="4 5 6 7">Core subunit of the mitochondrial membrane respiratory chain NADH dehydrogenase (Complex I) which catalyzes electron transfer from NADH through the respiratory chain, using ubiquinone as an electron acceptor (PubMed:10852722, PubMed:18721790, PubMed:25209663, PubMed:27509854). Parts of the peripheral arm of the enzyme, where the electrons from NADH are accepted by flavin mononucleotide (FMN) and then passed along a chain of iron-sulfur clusters by electron tunnelling to the final acceptor ubiquinone (PubMed:10852722, PubMed:25209663, PubMed:27509854). Contains one iron-sulfur cluster (PubMed:25209663, PubMed:27509854).</text>
</comment>
<comment type="catalytic activity">
    <reaction evidence="11 12 13 14">
        <text>a ubiquinone + NADH + 5 H(+)(in) = a ubiquinol + NAD(+) + 4 H(+)(out)</text>
        <dbReference type="Rhea" id="RHEA:29091"/>
        <dbReference type="Rhea" id="RHEA-COMP:9565"/>
        <dbReference type="Rhea" id="RHEA-COMP:9566"/>
        <dbReference type="ChEBI" id="CHEBI:15378"/>
        <dbReference type="ChEBI" id="CHEBI:16389"/>
        <dbReference type="ChEBI" id="CHEBI:17976"/>
        <dbReference type="ChEBI" id="CHEBI:57540"/>
        <dbReference type="ChEBI" id="CHEBI:57945"/>
        <dbReference type="EC" id="7.1.1.2"/>
    </reaction>
    <physiologicalReaction direction="left-to-right" evidence="11 12 13 14">
        <dbReference type="Rhea" id="RHEA:29092"/>
    </physiologicalReaction>
</comment>
<comment type="cofactor">
    <cofactor evidence="7">
        <name>[2Fe-2S] cluster</name>
        <dbReference type="ChEBI" id="CHEBI:190135"/>
    </cofactor>
    <text evidence="7">Binds 1 [2Fe-2S] cluster.</text>
</comment>
<comment type="subunit">
    <text evidence="4 5 7">Core subunit of respiratory chain NADH dehydrogenase (Complex I) which is composed of 45 different subunits (PubMed:10852722, PubMed:18721790, PubMed:27509854). This is a component of the flavoprotein-sulfur (FP) fragment of the enzyme.</text>
</comment>
<comment type="subcellular location">
    <subcellularLocation>
        <location evidence="4 5 6">Mitochondrion inner membrane</location>
        <topology evidence="13">Peripheral membrane protein</topology>
        <orientation evidence="13">Matrix side</orientation>
    </subcellularLocation>
</comment>
<comment type="similarity">
    <text evidence="10">Belongs to the complex I 24 kDa subunit family.</text>
</comment>
<proteinExistence type="evidence at protein level"/>
<reference key="1">
    <citation type="journal article" date="1989" name="Biochemistry">
        <title>Mitochondrial NADH-ubiquinone reductase: complementary DNA sequences of import precursors of the bovine and human 24-kDa subunit.</title>
        <authorList>
            <person name="Pilkington S.J."/>
            <person name="Walker J.E."/>
        </authorList>
    </citation>
    <scope>NUCLEOTIDE SEQUENCE [MRNA]</scope>
</reference>
<reference key="2">
    <citation type="submission" date="2005-08" db="EMBL/GenBank/DDBJ databases">
        <authorList>
            <consortium name="NIH - Mammalian Gene Collection (MGC) project"/>
        </authorList>
    </citation>
    <scope>NUCLEOTIDE SEQUENCE [LARGE SCALE MRNA]</scope>
    <source>
        <strain>Crossbred X Angus</strain>
        <tissue>Ileum</tissue>
    </source>
</reference>
<reference key="3">
    <citation type="journal article" date="1989" name="Curr. Genet.">
        <title>cDNA of the 24 kDa subunit of the bovine respiratory chain NADH dehydrogenase: high sequence conservation in mammals and tissue-specific and growth-dependent expression.</title>
        <authorList>
            <person name="Chomyn A."/>
            <person name="Tsai Lai S.S.-A."/>
        </authorList>
    </citation>
    <scope>NUCLEOTIDE SEQUENCE [MRNA] OF 38-249</scope>
    <source>
        <tissue>Brain</tissue>
    </source>
</reference>
<reference key="4">
    <citation type="journal article" date="1983" name="Eur. J. Biochem.">
        <title>The primary structure of subunit II of NADH dehydrogenase from bovine-heart mitochondria.</title>
        <authorList>
            <person name="von Bahr-Lindstroem H."/>
            <person name="Galante Y.M."/>
            <person name="Persson M."/>
            <person name="Joernvall H."/>
        </authorList>
    </citation>
    <scope>PROTEIN SEQUENCE OF 33-249</scope>
    <source>
        <tissue>Heart</tissue>
    </source>
</reference>
<reference key="5">
    <citation type="journal article" date="2000" name="Biochemistry">
        <title>Resolution of the membrane domain of bovine complex I into subcomplexes: implications for the structural organization of the enzyme.</title>
        <authorList>
            <person name="Sazanov L.A."/>
            <person name="Peak-Chew S.Y."/>
            <person name="Fearnley I.M."/>
            <person name="Walker J.E."/>
        </authorList>
    </citation>
    <scope>PARTIAL PROTEIN SEQUENCE</scope>
    <scope>SUBUNIT</scope>
    <scope>IDENTIFICATION IN COMPLEX I</scope>
    <scope>FUNCTION</scope>
    <scope>CATALYTIC ACTIVITY</scope>
    <scope>SUBCELLULAR LOCATION</scope>
</reference>
<reference key="6">
    <citation type="journal article" date="2008" name="Anal. Biochem.">
        <title>Subunit analysis of bovine heart complex I by reversed-phase high-performance liquid chromatography, electrospray ionization-tandem mass spectrometry, and matrix-assisted laser desorption/ionization-time-of-flight mass spectrometry.</title>
        <authorList>
            <person name="Lemma-Gray P."/>
            <person name="Valusova E."/>
            <person name="Carroll C.A."/>
            <person name="Weintraub S.T."/>
            <person name="Musatov A."/>
            <person name="Robinson N.C."/>
        </authorList>
    </citation>
    <scope>SUBUNIT</scope>
    <scope>IDENTIFICATION IN COMPLEX I</scope>
    <scope>FUNCTION</scope>
    <scope>CATALYTIC ACTIVITY</scope>
    <scope>SUBCELLULAR LOCATION</scope>
</reference>
<reference key="7">
    <citation type="journal article" date="2014" name="Nature">
        <title>Architecture of mammalian respiratory complex I.</title>
        <authorList>
            <person name="Vinothkumar K.R."/>
            <person name="Zhu J."/>
            <person name="Hirst J."/>
        </authorList>
    </citation>
    <scope>FUNCTION</scope>
    <scope>CATALYTIC ACTIVITY</scope>
    <scope>SUBUNIT</scope>
    <scope>SUBCELLULAR LOCATION</scope>
    <scope>TOPOLOGY</scope>
</reference>
<reference evidence="15 16 17" key="8">
    <citation type="journal article" date="2016" name="Nature">
        <title>Structure of mammalian respiratory complex I.</title>
        <authorList>
            <person name="Zhu J."/>
            <person name="Vinothkumar K.R."/>
            <person name="Hirst J."/>
        </authorList>
    </citation>
    <scope>STRUCTURE BY ELECTRON MICROSCOPY (4.27 ANGSTROMS) OF 33-249</scope>
    <scope>FUNCTION</scope>
    <scope>CATALYTIC ACTIVITY</scope>
    <scope>COFACTOR</scope>
</reference>